<proteinExistence type="evidence at protein level"/>
<accession>P58280</accession>
<dbReference type="PIR" id="A23889">
    <property type="entry name" value="A23889"/>
</dbReference>
<dbReference type="SMR" id="P58280"/>
<dbReference type="FunCoup" id="P58280">
    <property type="interactions" value="64"/>
</dbReference>
<dbReference type="InParanoid" id="P58280"/>
<dbReference type="Proteomes" id="UP000009136">
    <property type="component" value="Unplaced"/>
</dbReference>
<dbReference type="GO" id="GO:0005737">
    <property type="term" value="C:cytoplasm"/>
    <property type="evidence" value="ECO:0000250"/>
    <property type="project" value="UniProtKB"/>
</dbReference>
<dbReference type="GO" id="GO:0005634">
    <property type="term" value="C:nucleus"/>
    <property type="evidence" value="ECO:0000250"/>
    <property type="project" value="UniProtKB"/>
</dbReference>
<dbReference type="GO" id="GO:0046872">
    <property type="term" value="F:metal ion binding"/>
    <property type="evidence" value="ECO:0000318"/>
    <property type="project" value="GO_Central"/>
</dbReference>
<dbReference type="GO" id="GO:0008270">
    <property type="term" value="F:zinc ion binding"/>
    <property type="evidence" value="ECO:0000250"/>
    <property type="project" value="UniProtKB"/>
</dbReference>
<dbReference type="GO" id="GO:0071276">
    <property type="term" value="P:cellular response to cadmium ion"/>
    <property type="evidence" value="ECO:0000318"/>
    <property type="project" value="GO_Central"/>
</dbReference>
<dbReference type="GO" id="GO:0071280">
    <property type="term" value="P:cellular response to copper ion"/>
    <property type="evidence" value="ECO:0000318"/>
    <property type="project" value="GO_Central"/>
</dbReference>
<dbReference type="GO" id="GO:0071294">
    <property type="term" value="P:cellular response to zinc ion"/>
    <property type="evidence" value="ECO:0000250"/>
    <property type="project" value="UniProtKB"/>
</dbReference>
<dbReference type="GO" id="GO:0010273">
    <property type="term" value="P:detoxification of copper ion"/>
    <property type="evidence" value="ECO:0000318"/>
    <property type="project" value="GO_Central"/>
</dbReference>
<dbReference type="GO" id="GO:0006882">
    <property type="term" value="P:intracellular zinc ion homeostasis"/>
    <property type="evidence" value="ECO:0000318"/>
    <property type="project" value="GO_Central"/>
</dbReference>
<dbReference type="GO" id="GO:0045926">
    <property type="term" value="P:negative regulation of growth"/>
    <property type="evidence" value="ECO:0000250"/>
    <property type="project" value="UniProtKB"/>
</dbReference>
<dbReference type="FunFam" id="4.10.10.10:FF:000001">
    <property type="entry name" value="Metallothionein"/>
    <property type="match status" value="1"/>
</dbReference>
<dbReference type="Gene3D" id="4.10.10.10">
    <property type="entry name" value="Metallothionein Isoform II"/>
    <property type="match status" value="1"/>
</dbReference>
<dbReference type="InterPro" id="IPR017854">
    <property type="entry name" value="Metalthion_dom_sf"/>
</dbReference>
<dbReference type="InterPro" id="IPR023587">
    <property type="entry name" value="Metalthion_dom_sf_vert"/>
</dbReference>
<dbReference type="InterPro" id="IPR000006">
    <property type="entry name" value="Metalthion_vert"/>
</dbReference>
<dbReference type="InterPro" id="IPR018064">
    <property type="entry name" value="Metalthion_vert_metal_BS"/>
</dbReference>
<dbReference type="PANTHER" id="PTHR23299">
    <property type="entry name" value="METALLOTHIONEIN"/>
    <property type="match status" value="1"/>
</dbReference>
<dbReference type="PANTHER" id="PTHR23299:SF22">
    <property type="entry name" value="METALLOTHIONEIN-1G"/>
    <property type="match status" value="1"/>
</dbReference>
<dbReference type="Pfam" id="PF00131">
    <property type="entry name" value="Metallothio"/>
    <property type="match status" value="1"/>
</dbReference>
<dbReference type="PRINTS" id="PR00860">
    <property type="entry name" value="MTVERTEBRATE"/>
</dbReference>
<dbReference type="SUPFAM" id="SSF57868">
    <property type="entry name" value="Metallothionein"/>
    <property type="match status" value="1"/>
</dbReference>
<dbReference type="PROSITE" id="PS00203">
    <property type="entry name" value="METALLOTHIONEIN_VRT"/>
    <property type="match status" value="1"/>
</dbReference>
<protein>
    <recommendedName>
        <fullName>Metallothionein-1</fullName>
        <shortName>MT-1</shortName>
    </recommendedName>
    <alternativeName>
        <fullName>Metallothionein-I</fullName>
        <shortName>MT-I</shortName>
    </alternativeName>
</protein>
<name>MT1_BOVIN</name>
<evidence type="ECO:0000250" key="1">
    <source>
        <dbReference type="UniProtKB" id="P02795"/>
    </source>
</evidence>
<evidence type="ECO:0000250" key="2">
    <source>
        <dbReference type="UniProtKB" id="P02802"/>
    </source>
</evidence>
<evidence type="ECO:0000305" key="3"/>
<sequence>MDPNCSCPTGGSCTCAGSCKCKACRCPSCKKSCCSCCPVGCAKCAQGCVCKGASDKCSCCA</sequence>
<feature type="chain" id="PRO_0000197197" description="Metallothionein-1">
    <location>
        <begin position="1"/>
        <end position="61"/>
    </location>
</feature>
<feature type="region of interest" description="Beta">
    <location>
        <begin position="1"/>
        <end position="29"/>
    </location>
</feature>
<feature type="region of interest" description="Alpha">
    <location>
        <begin position="30"/>
        <end position="61"/>
    </location>
</feature>
<feature type="binding site" evidence="1">
    <location>
        <position position="5"/>
    </location>
    <ligand>
        <name>a divalent metal cation</name>
        <dbReference type="ChEBI" id="CHEBI:60240"/>
        <label>1</label>
        <note>in cluster B</note>
    </ligand>
</feature>
<feature type="binding site" evidence="1">
    <location>
        <position position="7"/>
    </location>
    <ligand>
        <name>a divalent metal cation</name>
        <dbReference type="ChEBI" id="CHEBI:60240"/>
        <label>1</label>
        <note>in cluster B</note>
    </ligand>
</feature>
<feature type="binding site" evidence="1">
    <location>
        <position position="7"/>
    </location>
    <ligand>
        <name>a divalent metal cation</name>
        <dbReference type="ChEBI" id="CHEBI:60240"/>
        <label>2</label>
        <note>in cluster B</note>
    </ligand>
</feature>
<feature type="binding site" evidence="1">
    <location>
        <position position="13"/>
    </location>
    <ligand>
        <name>a divalent metal cation</name>
        <dbReference type="ChEBI" id="CHEBI:60240"/>
        <label>2</label>
        <note>in cluster B</note>
    </ligand>
</feature>
<feature type="binding site" evidence="1">
    <location>
        <position position="15"/>
    </location>
    <ligand>
        <name>a divalent metal cation</name>
        <dbReference type="ChEBI" id="CHEBI:60240"/>
        <label>2</label>
        <note>in cluster B</note>
    </ligand>
</feature>
<feature type="binding site" evidence="1">
    <location>
        <position position="15"/>
    </location>
    <ligand>
        <name>a divalent metal cation</name>
        <dbReference type="ChEBI" id="CHEBI:60240"/>
        <label>3</label>
        <note>in cluster B</note>
    </ligand>
</feature>
<feature type="binding site" evidence="1">
    <location>
        <position position="19"/>
    </location>
    <ligand>
        <name>a divalent metal cation</name>
        <dbReference type="ChEBI" id="CHEBI:60240"/>
        <label>3</label>
        <note>in cluster B</note>
    </ligand>
</feature>
<feature type="binding site" evidence="1">
    <location>
        <position position="21"/>
    </location>
    <ligand>
        <name>a divalent metal cation</name>
        <dbReference type="ChEBI" id="CHEBI:60240"/>
        <label>1</label>
        <note>in cluster B</note>
    </ligand>
</feature>
<feature type="binding site" evidence="1">
    <location>
        <position position="24"/>
    </location>
    <ligand>
        <name>a divalent metal cation</name>
        <dbReference type="ChEBI" id="CHEBI:60240"/>
        <label>1</label>
        <note>in cluster B</note>
    </ligand>
</feature>
<feature type="binding site" evidence="1">
    <location>
        <position position="24"/>
    </location>
    <ligand>
        <name>a divalent metal cation</name>
        <dbReference type="ChEBI" id="CHEBI:60240"/>
        <label>3</label>
        <note>in cluster B</note>
    </ligand>
</feature>
<feature type="binding site" evidence="1">
    <location>
        <position position="26"/>
    </location>
    <ligand>
        <name>a divalent metal cation</name>
        <dbReference type="ChEBI" id="CHEBI:60240"/>
        <label>2</label>
        <note>in cluster B</note>
    </ligand>
</feature>
<feature type="binding site" evidence="1">
    <location>
        <position position="29"/>
    </location>
    <ligand>
        <name>a divalent metal cation</name>
        <dbReference type="ChEBI" id="CHEBI:60240"/>
        <label>3</label>
        <note>in cluster B</note>
    </ligand>
</feature>
<feature type="binding site" evidence="1">
    <location>
        <position position="33"/>
    </location>
    <ligand>
        <name>a divalent metal cation</name>
        <dbReference type="ChEBI" id="CHEBI:60240"/>
        <label>4</label>
        <note>in cluster A</note>
    </ligand>
</feature>
<feature type="binding site" evidence="1">
    <location>
        <position position="34"/>
    </location>
    <ligand>
        <name>a divalent metal cation</name>
        <dbReference type="ChEBI" id="CHEBI:60240"/>
        <label>4</label>
        <note>in cluster A</note>
    </ligand>
</feature>
<feature type="binding site" evidence="1">
    <location>
        <position position="34"/>
    </location>
    <ligand>
        <name>a divalent metal cation</name>
        <dbReference type="ChEBI" id="CHEBI:60240"/>
        <label>5</label>
        <note>in cluster A</note>
    </ligand>
</feature>
<feature type="binding site" evidence="1">
    <location>
        <position position="36"/>
    </location>
    <ligand>
        <name>a divalent metal cation</name>
        <dbReference type="ChEBI" id="CHEBI:60240"/>
        <label>5</label>
        <note>in cluster A</note>
    </ligand>
</feature>
<feature type="binding site" evidence="1">
    <location>
        <position position="37"/>
    </location>
    <ligand>
        <name>a divalent metal cation</name>
        <dbReference type="ChEBI" id="CHEBI:60240"/>
        <label>5</label>
        <note>in cluster A</note>
    </ligand>
</feature>
<feature type="binding site" evidence="1">
    <location>
        <position position="37"/>
    </location>
    <ligand>
        <name>a divalent metal cation</name>
        <dbReference type="ChEBI" id="CHEBI:60240"/>
        <label>6</label>
        <note>in cluster A</note>
    </ligand>
</feature>
<feature type="binding site" evidence="1">
    <location>
        <position position="41"/>
    </location>
    <ligand>
        <name>a divalent metal cation</name>
        <dbReference type="ChEBI" id="CHEBI:60240"/>
        <label>6</label>
        <note>in cluster A</note>
    </ligand>
</feature>
<feature type="binding site" evidence="1">
    <location>
        <position position="44"/>
    </location>
    <ligand>
        <name>a divalent metal cation</name>
        <dbReference type="ChEBI" id="CHEBI:60240"/>
        <label>4</label>
        <note>in cluster A</note>
    </ligand>
</feature>
<feature type="binding site" evidence="1">
    <location>
        <position position="44"/>
    </location>
    <ligand>
        <name>a divalent metal cation</name>
        <dbReference type="ChEBI" id="CHEBI:60240"/>
        <label>6</label>
        <note>in cluster A</note>
    </ligand>
</feature>
<feature type="binding site" evidence="1">
    <location>
        <position position="48"/>
    </location>
    <ligand>
        <name>a divalent metal cation</name>
        <dbReference type="ChEBI" id="CHEBI:60240"/>
        <label>4</label>
        <note>in cluster A</note>
    </ligand>
</feature>
<feature type="binding site" evidence="1">
    <location>
        <position position="50"/>
    </location>
    <ligand>
        <name>a divalent metal cation</name>
        <dbReference type="ChEBI" id="CHEBI:60240"/>
        <label>5</label>
        <note>in cluster A</note>
    </ligand>
</feature>
<feature type="binding site" evidence="1">
    <location>
        <position position="50"/>
    </location>
    <ligand>
        <name>a divalent metal cation</name>
        <dbReference type="ChEBI" id="CHEBI:60240"/>
        <label>7</label>
        <note>in cluster A</note>
    </ligand>
</feature>
<feature type="binding site" evidence="1">
    <location>
        <position position="57"/>
    </location>
    <ligand>
        <name>a divalent metal cation</name>
        <dbReference type="ChEBI" id="CHEBI:60240"/>
        <label>7</label>
        <note>in cluster A</note>
    </ligand>
</feature>
<feature type="binding site" evidence="1">
    <location>
        <position position="59"/>
    </location>
    <ligand>
        <name>a divalent metal cation</name>
        <dbReference type="ChEBI" id="CHEBI:60240"/>
        <label>7</label>
        <note>in cluster A</note>
    </ligand>
</feature>
<feature type="binding site" evidence="1">
    <location>
        <position position="60"/>
    </location>
    <ligand>
        <name>a divalent metal cation</name>
        <dbReference type="ChEBI" id="CHEBI:60240"/>
        <label>6</label>
        <note>in cluster A</note>
    </ligand>
</feature>
<feature type="binding site" evidence="1">
    <location>
        <position position="60"/>
    </location>
    <ligand>
        <name>a divalent metal cation</name>
        <dbReference type="ChEBI" id="CHEBI:60240"/>
        <label>7</label>
        <note>in cluster A</note>
    </ligand>
</feature>
<feature type="modified residue" description="N-acetylmethionine" evidence="2">
    <location>
        <position position="1"/>
    </location>
</feature>
<reference key="1">
    <citation type="journal article" date="1985" name="J. Biol. Chem.">
        <title>(Cu,Zn)-metallothioneins from fetal bovine liver. Chemical and spectroscopic properties.</title>
        <authorList>
            <person name="Muenger K."/>
            <person name="Germann U.A."/>
            <person name="Beltramini M."/>
            <person name="Niedermann D."/>
            <person name="Baitella-Eberle G."/>
            <person name="Kaegi J.H.R."/>
            <person name="Lerch K."/>
        </authorList>
    </citation>
    <scope>PROTEIN SEQUENCE</scope>
    <source>
        <tissue>Liver</tissue>
    </source>
</reference>
<comment type="function">
    <text>Metallothioneins have a high content of cysteine residues that bind various heavy metals; these proteins are transcriptionally regulated by both heavy metals and glucocorticoids.</text>
</comment>
<comment type="subunit">
    <text>Monomer.</text>
</comment>
<comment type="domain">
    <text>Class I metallothioneins contain 2 metal-binding domains: four divalent ions are chelated within cluster A of the alpha domain and are coordinated via cysteinyl thiolate bridges to 11 cysteine ligands. Cluster B, the corresponding region within the beta domain, can ligate three divalent ions to 9 cysteines.</text>
</comment>
<comment type="similarity">
    <text evidence="3">Belongs to the metallothionein superfamily. Type 1 family.</text>
</comment>
<organism>
    <name type="scientific">Bos taurus</name>
    <name type="common">Bovine</name>
    <dbReference type="NCBI Taxonomy" id="9913"/>
    <lineage>
        <taxon>Eukaryota</taxon>
        <taxon>Metazoa</taxon>
        <taxon>Chordata</taxon>
        <taxon>Craniata</taxon>
        <taxon>Vertebrata</taxon>
        <taxon>Euteleostomi</taxon>
        <taxon>Mammalia</taxon>
        <taxon>Eutheria</taxon>
        <taxon>Laurasiatheria</taxon>
        <taxon>Artiodactyla</taxon>
        <taxon>Ruminantia</taxon>
        <taxon>Pecora</taxon>
        <taxon>Bovidae</taxon>
        <taxon>Bovinae</taxon>
        <taxon>Bos</taxon>
    </lineage>
</organism>
<keyword id="KW-0007">Acetylation</keyword>
<keyword id="KW-0104">Cadmium</keyword>
<keyword id="KW-0186">Copper</keyword>
<keyword id="KW-0903">Direct protein sequencing</keyword>
<keyword id="KW-0479">Metal-binding</keyword>
<keyword id="KW-0480">Metal-thiolate cluster</keyword>
<keyword id="KW-1185">Reference proteome</keyword>
<keyword id="KW-0862">Zinc</keyword>
<gene>
    <name type="primary">MT1</name>
</gene>